<accession>Q7YT61</accession>
<name>SCX5C_CENLI</name>
<proteinExistence type="evidence at transcript level"/>
<protein>
    <recommendedName>
        <fullName>Toxin Cll5c</fullName>
    </recommendedName>
</protein>
<feature type="signal peptide" evidence="1">
    <location>
        <begin position="1"/>
        <end position="19"/>
    </location>
</feature>
<feature type="chain" id="PRO_0000035271" description="Toxin Cll5c">
    <location>
        <begin position="20"/>
        <end position="85"/>
    </location>
</feature>
<feature type="propeptide" id="PRO_0000035272" description="Removed by a carboxypeptidase" evidence="1">
    <location>
        <begin position="86"/>
        <end position="87"/>
    </location>
</feature>
<feature type="domain" description="LCN-type CS-alpha/beta" evidence="2">
    <location>
        <begin position="20"/>
        <end position="85"/>
    </location>
</feature>
<feature type="disulfide bond" evidence="2">
    <location>
        <begin position="31"/>
        <end position="84"/>
    </location>
</feature>
<feature type="disulfide bond" evidence="2">
    <location>
        <begin position="35"/>
        <end position="60"/>
    </location>
</feature>
<feature type="disulfide bond" evidence="2">
    <location>
        <begin position="44"/>
        <end position="65"/>
    </location>
</feature>
<feature type="disulfide bond" evidence="2">
    <location>
        <begin position="48"/>
        <end position="67"/>
    </location>
</feature>
<reference key="1">
    <citation type="submission" date="2002-03" db="EMBL/GenBank/DDBJ databases">
        <title>Genes and peptides from the scorpion Centruroides limpidus limpidus, that recognize Na(+)-channels.</title>
        <authorList>
            <person name="Corona M."/>
            <person name="Possani L.D."/>
        </authorList>
    </citation>
    <scope>NUCLEOTIDE SEQUENCE [MRNA]</scope>
    <source>
        <tissue>Venom gland</tissue>
    </source>
</reference>
<dbReference type="EMBL" id="AF491131">
    <property type="protein sequence ID" value="AAP49506.1"/>
    <property type="molecule type" value="mRNA"/>
</dbReference>
<dbReference type="SMR" id="Q7YT61"/>
<dbReference type="GO" id="GO:0005576">
    <property type="term" value="C:extracellular region"/>
    <property type="evidence" value="ECO:0007669"/>
    <property type="project" value="UniProtKB-SubCell"/>
</dbReference>
<dbReference type="GO" id="GO:0019871">
    <property type="term" value="F:sodium channel inhibitor activity"/>
    <property type="evidence" value="ECO:0007669"/>
    <property type="project" value="InterPro"/>
</dbReference>
<dbReference type="GO" id="GO:0090729">
    <property type="term" value="F:toxin activity"/>
    <property type="evidence" value="ECO:0007669"/>
    <property type="project" value="UniProtKB-KW"/>
</dbReference>
<dbReference type="GO" id="GO:0006952">
    <property type="term" value="P:defense response"/>
    <property type="evidence" value="ECO:0007669"/>
    <property type="project" value="InterPro"/>
</dbReference>
<dbReference type="CDD" id="cd23106">
    <property type="entry name" value="neurotoxins_LC_scorpion"/>
    <property type="match status" value="1"/>
</dbReference>
<dbReference type="FunFam" id="3.30.30.10:FF:000002">
    <property type="entry name" value="Alpha-like toxin BmK-M1"/>
    <property type="match status" value="1"/>
</dbReference>
<dbReference type="Gene3D" id="3.30.30.10">
    <property type="entry name" value="Knottin, scorpion toxin-like"/>
    <property type="match status" value="1"/>
</dbReference>
<dbReference type="InterPro" id="IPR044062">
    <property type="entry name" value="LCN-type_CS_alpha_beta_dom"/>
</dbReference>
<dbReference type="InterPro" id="IPR003614">
    <property type="entry name" value="Scorpion_toxin-like"/>
</dbReference>
<dbReference type="InterPro" id="IPR036574">
    <property type="entry name" value="Scorpion_toxin-like_sf"/>
</dbReference>
<dbReference type="InterPro" id="IPR018218">
    <property type="entry name" value="Scorpion_toxinL"/>
</dbReference>
<dbReference type="InterPro" id="IPR002061">
    <property type="entry name" value="Scorpion_toxinL/defensin"/>
</dbReference>
<dbReference type="Pfam" id="PF00537">
    <property type="entry name" value="Toxin_3"/>
    <property type="match status" value="1"/>
</dbReference>
<dbReference type="PRINTS" id="PR00285">
    <property type="entry name" value="SCORPNTOXIN"/>
</dbReference>
<dbReference type="SMART" id="SM00505">
    <property type="entry name" value="Knot1"/>
    <property type="match status" value="1"/>
</dbReference>
<dbReference type="SUPFAM" id="SSF57095">
    <property type="entry name" value="Scorpion toxin-like"/>
    <property type="match status" value="1"/>
</dbReference>
<dbReference type="PROSITE" id="PS51863">
    <property type="entry name" value="LCN_CSAB"/>
    <property type="match status" value="1"/>
</dbReference>
<comment type="function">
    <text evidence="1">Beta toxins bind voltage-independently at site-4 of sodium channels (Nav) and shift the voltage of activation toward more negative potentials thereby affecting sodium channel activation and promoting spontaneous and repetitive firing.</text>
</comment>
<comment type="subcellular location">
    <subcellularLocation>
        <location evidence="1">Secreted</location>
    </subcellularLocation>
</comment>
<comment type="tissue specificity">
    <text>Expressed by the venom gland.</text>
</comment>
<comment type="domain">
    <text evidence="3">Has the structural arrangement of an alpha-helix connected to antiparallel beta-sheets by disulfide bonds (CS-alpha/beta).</text>
</comment>
<comment type="similarity">
    <text evidence="3">Belongs to the long (4 C-C) scorpion toxin superfamily. Sodium channel inhibitor family. Beta subfamily.</text>
</comment>
<keyword id="KW-1015">Disulfide bond</keyword>
<keyword id="KW-0872">Ion channel impairing toxin</keyword>
<keyword id="KW-0528">Neurotoxin</keyword>
<keyword id="KW-0964">Secreted</keyword>
<keyword id="KW-0732">Signal</keyword>
<keyword id="KW-0800">Toxin</keyword>
<keyword id="KW-0738">Voltage-gated sodium channel impairing toxin</keyword>
<organism>
    <name type="scientific">Centruroides limpidus</name>
    <name type="common">Mexican scorpion</name>
    <dbReference type="NCBI Taxonomy" id="6876"/>
    <lineage>
        <taxon>Eukaryota</taxon>
        <taxon>Metazoa</taxon>
        <taxon>Ecdysozoa</taxon>
        <taxon>Arthropoda</taxon>
        <taxon>Chelicerata</taxon>
        <taxon>Arachnida</taxon>
        <taxon>Scorpiones</taxon>
        <taxon>Buthida</taxon>
        <taxon>Buthoidea</taxon>
        <taxon>Buthidae</taxon>
        <taxon>Centruroides</taxon>
    </lineage>
</organism>
<sequence length="87" mass="9649">MNSLLMITACLVLFGTVWAKEGYLVNKSTGCKYGCFWLGKNENCDMECKAKNQGGSYGYCYSFACWCEGLPDSTPTYPLPNKSCSKK</sequence>
<evidence type="ECO:0000250" key="1"/>
<evidence type="ECO:0000255" key="2">
    <source>
        <dbReference type="PROSITE-ProRule" id="PRU01210"/>
    </source>
</evidence>
<evidence type="ECO:0000305" key="3"/>